<feature type="chain" id="PRO_0000336016" description="Endoribonuclease YbeY">
    <location>
        <begin position="1"/>
        <end position="156"/>
    </location>
</feature>
<feature type="binding site" evidence="1">
    <location>
        <position position="117"/>
    </location>
    <ligand>
        <name>Zn(2+)</name>
        <dbReference type="ChEBI" id="CHEBI:29105"/>
        <note>catalytic</note>
    </ligand>
</feature>
<feature type="binding site" evidence="1">
    <location>
        <position position="121"/>
    </location>
    <ligand>
        <name>Zn(2+)</name>
        <dbReference type="ChEBI" id="CHEBI:29105"/>
        <note>catalytic</note>
    </ligand>
</feature>
<feature type="binding site" evidence="1">
    <location>
        <position position="127"/>
    </location>
    <ligand>
        <name>Zn(2+)</name>
        <dbReference type="ChEBI" id="CHEBI:29105"/>
        <note>catalytic</note>
    </ligand>
</feature>
<evidence type="ECO:0000255" key="1">
    <source>
        <dbReference type="HAMAP-Rule" id="MF_00009"/>
    </source>
</evidence>
<name>YBEY_SHEHH</name>
<protein>
    <recommendedName>
        <fullName evidence="1">Endoribonuclease YbeY</fullName>
        <ecNumber evidence="1">3.1.-.-</ecNumber>
    </recommendedName>
</protein>
<accession>B0TR40</accession>
<sequence length="156" mass="17556">MNDNQTVIDLDLQIAVEGFELPSQAELELWVKTALRDTMSEAELTIRIVDVEESQELNSTYRGKDKPTNVLSFPFEAPPGIELPLLGDLVICAAVVKQEAMDQNKPLIAHWAHMVVHGCLHLLGYDHIDDSEAEEMESLETHLIESLGYINPYKEQ</sequence>
<comment type="function">
    <text evidence="1">Single strand-specific metallo-endoribonuclease involved in late-stage 70S ribosome quality control and in maturation of the 3' terminus of the 16S rRNA.</text>
</comment>
<comment type="cofactor">
    <cofactor evidence="1">
        <name>Zn(2+)</name>
        <dbReference type="ChEBI" id="CHEBI:29105"/>
    </cofactor>
    <text evidence="1">Binds 1 zinc ion.</text>
</comment>
<comment type="subcellular location">
    <subcellularLocation>
        <location evidence="1">Cytoplasm</location>
    </subcellularLocation>
</comment>
<comment type="similarity">
    <text evidence="1">Belongs to the endoribonuclease YbeY family.</text>
</comment>
<reference key="1">
    <citation type="submission" date="2008-01" db="EMBL/GenBank/DDBJ databases">
        <title>Complete sequence of Shewanella halifaxensis HAW-EB4.</title>
        <authorList>
            <consortium name="US DOE Joint Genome Institute"/>
            <person name="Copeland A."/>
            <person name="Lucas S."/>
            <person name="Lapidus A."/>
            <person name="Glavina del Rio T."/>
            <person name="Dalin E."/>
            <person name="Tice H."/>
            <person name="Bruce D."/>
            <person name="Goodwin L."/>
            <person name="Pitluck S."/>
            <person name="Sims D."/>
            <person name="Brettin T."/>
            <person name="Detter J.C."/>
            <person name="Han C."/>
            <person name="Kuske C.R."/>
            <person name="Schmutz J."/>
            <person name="Larimer F."/>
            <person name="Land M."/>
            <person name="Hauser L."/>
            <person name="Kyrpides N."/>
            <person name="Kim E."/>
            <person name="Zhao J.-S."/>
            <person name="Richardson P."/>
        </authorList>
    </citation>
    <scope>NUCLEOTIDE SEQUENCE [LARGE SCALE GENOMIC DNA]</scope>
    <source>
        <strain>HAW-EB4</strain>
    </source>
</reference>
<organism>
    <name type="scientific">Shewanella halifaxensis (strain HAW-EB4)</name>
    <dbReference type="NCBI Taxonomy" id="458817"/>
    <lineage>
        <taxon>Bacteria</taxon>
        <taxon>Pseudomonadati</taxon>
        <taxon>Pseudomonadota</taxon>
        <taxon>Gammaproteobacteria</taxon>
        <taxon>Alteromonadales</taxon>
        <taxon>Shewanellaceae</taxon>
        <taxon>Shewanella</taxon>
    </lineage>
</organism>
<gene>
    <name evidence="1" type="primary">ybeY</name>
    <name type="ordered locus">Shal_3224</name>
</gene>
<keyword id="KW-0963">Cytoplasm</keyword>
<keyword id="KW-0255">Endonuclease</keyword>
<keyword id="KW-0378">Hydrolase</keyword>
<keyword id="KW-0479">Metal-binding</keyword>
<keyword id="KW-0540">Nuclease</keyword>
<keyword id="KW-0690">Ribosome biogenesis</keyword>
<keyword id="KW-0698">rRNA processing</keyword>
<keyword id="KW-0862">Zinc</keyword>
<proteinExistence type="inferred from homology"/>
<dbReference type="EC" id="3.1.-.-" evidence="1"/>
<dbReference type="EMBL" id="CP000931">
    <property type="protein sequence ID" value="ABZ77771.1"/>
    <property type="molecule type" value="Genomic_DNA"/>
</dbReference>
<dbReference type="RefSeq" id="WP_012278294.1">
    <property type="nucleotide sequence ID" value="NC_010334.1"/>
</dbReference>
<dbReference type="SMR" id="B0TR40"/>
<dbReference type="STRING" id="458817.Shal_3224"/>
<dbReference type="KEGG" id="shl:Shal_3224"/>
<dbReference type="eggNOG" id="COG0319">
    <property type="taxonomic scope" value="Bacteria"/>
</dbReference>
<dbReference type="HOGENOM" id="CLU_106710_0_1_6"/>
<dbReference type="OrthoDB" id="9807740at2"/>
<dbReference type="Proteomes" id="UP000001317">
    <property type="component" value="Chromosome"/>
</dbReference>
<dbReference type="GO" id="GO:0005737">
    <property type="term" value="C:cytoplasm"/>
    <property type="evidence" value="ECO:0007669"/>
    <property type="project" value="UniProtKB-SubCell"/>
</dbReference>
<dbReference type="GO" id="GO:0004222">
    <property type="term" value="F:metalloendopeptidase activity"/>
    <property type="evidence" value="ECO:0007669"/>
    <property type="project" value="InterPro"/>
</dbReference>
<dbReference type="GO" id="GO:0004521">
    <property type="term" value="F:RNA endonuclease activity"/>
    <property type="evidence" value="ECO:0007669"/>
    <property type="project" value="UniProtKB-UniRule"/>
</dbReference>
<dbReference type="GO" id="GO:0008270">
    <property type="term" value="F:zinc ion binding"/>
    <property type="evidence" value="ECO:0007669"/>
    <property type="project" value="UniProtKB-UniRule"/>
</dbReference>
<dbReference type="GO" id="GO:0006364">
    <property type="term" value="P:rRNA processing"/>
    <property type="evidence" value="ECO:0007669"/>
    <property type="project" value="UniProtKB-UniRule"/>
</dbReference>
<dbReference type="Gene3D" id="3.40.390.30">
    <property type="entry name" value="Metalloproteases ('zincins'), catalytic domain"/>
    <property type="match status" value="1"/>
</dbReference>
<dbReference type="HAMAP" id="MF_00009">
    <property type="entry name" value="Endoribonucl_YbeY"/>
    <property type="match status" value="1"/>
</dbReference>
<dbReference type="InterPro" id="IPR023091">
    <property type="entry name" value="MetalPrtase_cat_dom_sf_prd"/>
</dbReference>
<dbReference type="InterPro" id="IPR002036">
    <property type="entry name" value="YbeY"/>
</dbReference>
<dbReference type="InterPro" id="IPR020549">
    <property type="entry name" value="YbeY_CS"/>
</dbReference>
<dbReference type="NCBIfam" id="TIGR00043">
    <property type="entry name" value="rRNA maturation RNase YbeY"/>
    <property type="match status" value="1"/>
</dbReference>
<dbReference type="PANTHER" id="PTHR46986">
    <property type="entry name" value="ENDORIBONUCLEASE YBEY, CHLOROPLASTIC"/>
    <property type="match status" value="1"/>
</dbReference>
<dbReference type="PANTHER" id="PTHR46986:SF1">
    <property type="entry name" value="ENDORIBONUCLEASE YBEY, CHLOROPLASTIC"/>
    <property type="match status" value="1"/>
</dbReference>
<dbReference type="Pfam" id="PF02130">
    <property type="entry name" value="YbeY"/>
    <property type="match status" value="1"/>
</dbReference>
<dbReference type="SUPFAM" id="SSF55486">
    <property type="entry name" value="Metalloproteases ('zincins'), catalytic domain"/>
    <property type="match status" value="1"/>
</dbReference>
<dbReference type="PROSITE" id="PS01306">
    <property type="entry name" value="UPF0054"/>
    <property type="match status" value="1"/>
</dbReference>